<keyword id="KW-0808">Transferase</keyword>
<keyword id="KW-0816">Tricarboxylic acid cycle</keyword>
<dbReference type="EC" id="2.3.3.16"/>
<dbReference type="EMBL" id="U59732">
    <property type="protein sequence ID" value="AAB02963.1"/>
    <property type="molecule type" value="Genomic_DNA"/>
</dbReference>
<dbReference type="SMR" id="Q59759"/>
<dbReference type="UniPathway" id="UPA00223">
    <property type="reaction ID" value="UER00717"/>
</dbReference>
<dbReference type="GO" id="GO:0005737">
    <property type="term" value="C:cytoplasm"/>
    <property type="evidence" value="ECO:0007669"/>
    <property type="project" value="InterPro"/>
</dbReference>
<dbReference type="GO" id="GO:0004108">
    <property type="term" value="F:citrate (Si)-synthase activity"/>
    <property type="evidence" value="ECO:0007669"/>
    <property type="project" value="InterPro"/>
</dbReference>
<dbReference type="GO" id="GO:0006099">
    <property type="term" value="P:tricarboxylic acid cycle"/>
    <property type="evidence" value="ECO:0007669"/>
    <property type="project" value="UniProtKB-UniPathway"/>
</dbReference>
<dbReference type="CDD" id="cd06114">
    <property type="entry name" value="EcCS_like"/>
    <property type="match status" value="1"/>
</dbReference>
<dbReference type="FunFam" id="1.10.230.10:FF:000002">
    <property type="entry name" value="Citrate synthase"/>
    <property type="match status" value="1"/>
</dbReference>
<dbReference type="Gene3D" id="2.20.28.60">
    <property type="match status" value="1"/>
</dbReference>
<dbReference type="Gene3D" id="1.10.580.10">
    <property type="entry name" value="Citrate Synthase, domain 1"/>
    <property type="match status" value="1"/>
</dbReference>
<dbReference type="Gene3D" id="1.10.230.10">
    <property type="entry name" value="Cytochrome P450-Terp, domain 2"/>
    <property type="match status" value="1"/>
</dbReference>
<dbReference type="InterPro" id="IPR016142">
    <property type="entry name" value="Citrate_synth-like_lrg_a-sub"/>
</dbReference>
<dbReference type="InterPro" id="IPR016143">
    <property type="entry name" value="Citrate_synth-like_sm_a-sub"/>
</dbReference>
<dbReference type="InterPro" id="IPR002020">
    <property type="entry name" value="Citrate_synthase"/>
</dbReference>
<dbReference type="InterPro" id="IPR019810">
    <property type="entry name" value="Citrate_synthase_AS"/>
</dbReference>
<dbReference type="InterPro" id="IPR024176">
    <property type="entry name" value="Citrate_synthase_bac-typ"/>
</dbReference>
<dbReference type="InterPro" id="IPR036969">
    <property type="entry name" value="Citrate_synthase_sf"/>
</dbReference>
<dbReference type="InterPro" id="IPR010953">
    <property type="entry name" value="Citrate_synthase_typ-I"/>
</dbReference>
<dbReference type="NCBIfam" id="TIGR01798">
    <property type="entry name" value="cit_synth_I"/>
    <property type="match status" value="1"/>
</dbReference>
<dbReference type="NCBIfam" id="NF004126">
    <property type="entry name" value="PRK05614.1"/>
    <property type="match status" value="1"/>
</dbReference>
<dbReference type="PANTHER" id="PTHR42871">
    <property type="entry name" value="CITRATE SYNTHASE"/>
    <property type="match status" value="1"/>
</dbReference>
<dbReference type="PANTHER" id="PTHR42871:SF1">
    <property type="entry name" value="CITRATE SYNTHASE"/>
    <property type="match status" value="1"/>
</dbReference>
<dbReference type="Pfam" id="PF00285">
    <property type="entry name" value="Citrate_synt"/>
    <property type="match status" value="1"/>
</dbReference>
<dbReference type="PIRSF" id="PIRSF001369">
    <property type="entry name" value="Citrate_synth"/>
    <property type="match status" value="1"/>
</dbReference>
<dbReference type="PRINTS" id="PR00143">
    <property type="entry name" value="CITRTSNTHASE"/>
</dbReference>
<dbReference type="SUPFAM" id="SSF48256">
    <property type="entry name" value="Citrate synthase"/>
    <property type="match status" value="1"/>
</dbReference>
<dbReference type="PROSITE" id="PS00480">
    <property type="entry name" value="CITRATE_SYNTHASE"/>
    <property type="match status" value="1"/>
</dbReference>
<protein>
    <recommendedName>
        <fullName>Citrate synthase</fullName>
        <ecNumber>2.3.3.16</ecNumber>
    </recommendedName>
</protein>
<name>CISY_RICPA</name>
<comment type="catalytic activity">
    <reaction evidence="1">
        <text>oxaloacetate + acetyl-CoA + H2O = citrate + CoA + H(+)</text>
        <dbReference type="Rhea" id="RHEA:16845"/>
        <dbReference type="ChEBI" id="CHEBI:15377"/>
        <dbReference type="ChEBI" id="CHEBI:15378"/>
        <dbReference type="ChEBI" id="CHEBI:16452"/>
        <dbReference type="ChEBI" id="CHEBI:16947"/>
        <dbReference type="ChEBI" id="CHEBI:57287"/>
        <dbReference type="ChEBI" id="CHEBI:57288"/>
        <dbReference type="EC" id="2.3.3.16"/>
    </reaction>
</comment>
<comment type="pathway">
    <text>Carbohydrate metabolism; tricarboxylic acid cycle; isocitrate from oxaloacetate: step 1/2.</text>
</comment>
<comment type="miscellaneous">
    <text>Citrate synthase is found in nearly all cells capable of oxidative metabolism.</text>
</comment>
<comment type="similarity">
    <text evidence="2">Belongs to the citrate synthase family.</text>
</comment>
<evidence type="ECO:0000255" key="1">
    <source>
        <dbReference type="PROSITE-ProRule" id="PRU10117"/>
    </source>
</evidence>
<evidence type="ECO:0000305" key="2"/>
<proteinExistence type="inferred from homology"/>
<organism>
    <name type="scientific">Rickettsia parkeri</name>
    <dbReference type="NCBI Taxonomy" id="35792"/>
    <lineage>
        <taxon>Bacteria</taxon>
        <taxon>Pseudomonadati</taxon>
        <taxon>Pseudomonadota</taxon>
        <taxon>Alphaproteobacteria</taxon>
        <taxon>Rickettsiales</taxon>
        <taxon>Rickettsiaceae</taxon>
        <taxon>Rickettsieae</taxon>
        <taxon>Rickettsia</taxon>
        <taxon>spotted fever group</taxon>
    </lineage>
</organism>
<reference key="1">
    <citation type="journal article" date="1997" name="Int. J. Syst. Bacteriol.">
        <title>Citrate synthase gene comparison, a new tool for phylogenetic analysis, and its application for the rickettsiae.</title>
        <authorList>
            <person name="Roux V."/>
            <person name="Rydkina E."/>
            <person name="Eremeeva M."/>
            <person name="Raoult D."/>
        </authorList>
    </citation>
    <scope>NUCLEOTIDE SEQUENCE [GENOMIC DNA]</scope>
    <source>
        <strain>Maculatum 20</strain>
    </source>
</reference>
<gene>
    <name type="primary">gltA</name>
</gene>
<feature type="chain" id="PRO_0000169966" description="Citrate synthase">
    <location>
        <begin position="1" status="less than"/>
        <end position="411" status="greater than"/>
    </location>
</feature>
<feature type="active site" evidence="1">
    <location>
        <position position="304"/>
    </location>
</feature>
<feature type="active site" evidence="1">
    <location>
        <position position="363"/>
    </location>
</feature>
<feature type="non-terminal residue">
    <location>
        <position position="1"/>
    </location>
</feature>
<feature type="non-terminal residue">
    <location>
        <position position="411"/>
    </location>
</feature>
<sequence>DSEFAELKIRGKIFKLPILKASIGEDVIDISRVSAEADCFTYDPGFMSTASCQSTITYIDGDKGILRHRGYDIKDLAEKSDFLEVAYLLIYGELPSGEQYNNFTKQVAHHSLVNERLHYLFQTFCSSSHPMAIMLAAVGSLSAFYPDLLNFKEADYELTAIRMIAKIPTIAAMSYKYSIGQPFIYPDNSLDFTENFLHMMFATPCTKYTVNPIIKNALNKIFILHADHEQNASTSTVRIAGSSGANPFACISTGIASLWGPAHGGANEAVINMLKEIGSSEYIPKYIAKAKDKNDPFRLMGFGHRVYKNYDPRAAVLKETCKEVLKELGQLDNNPLLQIAIELEAIALKDEYFIERKLYPNVDFYSGIIYKAMGIPSQMFTVLFAIARTVGWMAQWKEMHEDPEQKISRPR</sequence>
<accession>Q59759</accession>